<reference key="1">
    <citation type="journal article" date="1972" name="J. Biol. Chem.">
        <title>The amino acid sequence of the monomeric hemoglobin component from the bloodworm, Glyat liver.</title>
        <authorList>
            <person name="Imamura T."/>
            <person name="Baldwin T.O."/>
            <person name="Riggs A."/>
        </authorList>
    </citation>
    <scope>PROTEIN SEQUENCE</scope>
</reference>
<reference key="2">
    <citation type="journal article" date="1974" name="J. Biol. Chem.">
        <title>Three-dimensional structure of hemoglobin from the polychaete annelid, Glycera dibranchiata, at 2.5-A resolution.</title>
        <authorList>
            <person name="Padlan E.A."/>
            <person name="Love W.E."/>
        </authorList>
    </citation>
    <scope>X-RAY CRYSTALLOGRAPHY (2.5 ANGSTROMS)</scope>
</reference>
<reference key="3">
    <citation type="journal article" date="1989" name="J. Mol. Biol.">
        <title>Glycera dibranchiata hemoglobin. Structure and refinement at 1.5-A resolution.</title>
        <authorList>
            <person name="Arents G.A."/>
            <person name="Love W.E."/>
        </authorList>
    </citation>
    <scope>X-RAY CRYSTALLOGRAPHY (1.5 ANGSTROMS)</scope>
    <scope>SEQUENCE REVISION</scope>
</reference>
<dbReference type="PIR" id="A02538">
    <property type="entry name" value="GGNW1B"/>
</dbReference>
<dbReference type="PDB" id="1HBG">
    <property type="method" value="X-ray"/>
    <property type="resolution" value="1.50 A"/>
    <property type="chains" value="A=1-147"/>
</dbReference>
<dbReference type="PDB" id="1JF3">
    <property type="method" value="X-ray"/>
    <property type="resolution" value="1.40 A"/>
    <property type="chains" value="A=1-147"/>
</dbReference>
<dbReference type="PDB" id="1JL7">
    <property type="method" value="X-ray"/>
    <property type="resolution" value="1.40 A"/>
    <property type="chains" value="A=1-147"/>
</dbReference>
<dbReference type="PDB" id="2HBG">
    <property type="method" value="X-ray"/>
    <property type="resolution" value="1.50 A"/>
    <property type="chains" value="A=1-147"/>
</dbReference>
<dbReference type="PDBsum" id="1HBG"/>
<dbReference type="PDBsum" id="1JF3"/>
<dbReference type="PDBsum" id="1JL7"/>
<dbReference type="PDBsum" id="2HBG"/>
<dbReference type="SMR" id="P02216"/>
<dbReference type="EvolutionaryTrace" id="P02216"/>
<dbReference type="GO" id="GO:0020037">
    <property type="term" value="F:heme binding"/>
    <property type="evidence" value="ECO:0007669"/>
    <property type="project" value="InterPro"/>
</dbReference>
<dbReference type="GO" id="GO:0046872">
    <property type="term" value="F:metal ion binding"/>
    <property type="evidence" value="ECO:0007669"/>
    <property type="project" value="UniProtKB-KW"/>
</dbReference>
<dbReference type="GO" id="GO:0019825">
    <property type="term" value="F:oxygen binding"/>
    <property type="evidence" value="ECO:0007669"/>
    <property type="project" value="InterPro"/>
</dbReference>
<dbReference type="GO" id="GO:0005344">
    <property type="term" value="F:oxygen carrier activity"/>
    <property type="evidence" value="ECO:0007669"/>
    <property type="project" value="UniProtKB-KW"/>
</dbReference>
<dbReference type="CDD" id="cd01040">
    <property type="entry name" value="Mb-like"/>
    <property type="match status" value="1"/>
</dbReference>
<dbReference type="Gene3D" id="1.10.490.10">
    <property type="entry name" value="Globins"/>
    <property type="match status" value="1"/>
</dbReference>
<dbReference type="InterPro" id="IPR000971">
    <property type="entry name" value="Globin"/>
</dbReference>
<dbReference type="InterPro" id="IPR050532">
    <property type="entry name" value="Globin-like_OT"/>
</dbReference>
<dbReference type="InterPro" id="IPR009050">
    <property type="entry name" value="Globin-like_sf"/>
</dbReference>
<dbReference type="InterPro" id="IPR012292">
    <property type="entry name" value="Globin/Proto"/>
</dbReference>
<dbReference type="InterPro" id="IPR044399">
    <property type="entry name" value="Mb-like_M"/>
</dbReference>
<dbReference type="PANTHER" id="PTHR46458">
    <property type="entry name" value="BLR2807 PROTEIN"/>
    <property type="match status" value="1"/>
</dbReference>
<dbReference type="PANTHER" id="PTHR46458:SF1">
    <property type="entry name" value="GEO09476P1"/>
    <property type="match status" value="1"/>
</dbReference>
<dbReference type="Pfam" id="PF00042">
    <property type="entry name" value="Globin"/>
    <property type="match status" value="1"/>
</dbReference>
<dbReference type="PRINTS" id="PR01907">
    <property type="entry name" value="WORMGLOBIN"/>
</dbReference>
<dbReference type="SUPFAM" id="SSF46458">
    <property type="entry name" value="Globin-like"/>
    <property type="match status" value="1"/>
</dbReference>
<dbReference type="PROSITE" id="PS01033">
    <property type="entry name" value="GLOBIN"/>
    <property type="match status" value="1"/>
</dbReference>
<comment type="subunit">
    <text>Monomer.</text>
</comment>
<comment type="miscellaneous">
    <text>X-ray crystallographic analysis indicates that the D helix is absent, Leu-58 replaces the distal His (of myoglobin E7), His-90 binds covalently to the heme iron, the F helix has several more residues than in mammalian globins, and Pro-105 (G7) causes a bend in the G helix.</text>
</comment>
<comment type="similarity">
    <text evidence="1">Belongs to the globin family.</text>
</comment>
<protein>
    <recommendedName>
        <fullName>Globin, major monomeric component</fullName>
    </recommendedName>
</protein>
<feature type="chain" id="PRO_0000052500" description="Globin, major monomeric component">
    <location>
        <begin position="1"/>
        <end position="147"/>
    </location>
</feature>
<feature type="domain" description="Globin" evidence="1">
    <location>
        <begin position="1"/>
        <end position="146"/>
    </location>
</feature>
<feature type="binding site" description="axial binding residue">
    <location>
        <position position="90"/>
    </location>
    <ligand>
        <name>heme b</name>
        <dbReference type="ChEBI" id="CHEBI:60344"/>
    </ligand>
    <ligandPart>
        <name>Fe</name>
        <dbReference type="ChEBI" id="CHEBI:18248"/>
    </ligandPart>
</feature>
<feature type="site" description="Causes a bend in the G helix">
    <location>
        <position position="105"/>
    </location>
</feature>
<feature type="sequence conflict" description="In Ref. 1; AA sequence." evidence="2" ref="1">
    <original>A</original>
    <variation>N</variation>
    <location>
        <position position="20"/>
    </location>
</feature>
<feature type="sequence conflict" description="In Ref. 1; AA sequence." evidence="2" ref="1">
    <original>F</original>
    <variation>H</variation>
    <location>
        <position position="34"/>
    </location>
</feature>
<feature type="sequence conflict" description="In Ref. 1; AA sequence." evidence="2" ref="1">
    <original>G</original>
    <variation>A</variation>
    <location>
        <position position="54"/>
    </location>
</feature>
<feature type="sequence conflict" description="In Ref. 1; AA sequence." evidence="2" ref="1">
    <original>A</original>
    <variation>D</variation>
    <location>
        <position position="57"/>
    </location>
</feature>
<feature type="sequence conflict" description="In Ref. 1; AA sequence." evidence="2" ref="1">
    <original>A</original>
    <variation>G</variation>
    <location>
        <position position="100"/>
    </location>
</feature>
<feature type="helix" evidence="4">
    <location>
        <begin position="4"/>
        <end position="18"/>
    </location>
</feature>
<feature type="turn" evidence="4">
    <location>
        <begin position="19"/>
        <end position="23"/>
    </location>
</feature>
<feature type="helix" evidence="4">
    <location>
        <begin position="24"/>
        <end position="37"/>
    </location>
</feature>
<feature type="helix" evidence="4">
    <location>
        <begin position="39"/>
        <end position="41"/>
    </location>
</feature>
<feature type="turn" evidence="4">
    <location>
        <begin position="42"/>
        <end position="46"/>
    </location>
</feature>
<feature type="helix" evidence="4">
    <location>
        <begin position="53"/>
        <end position="71"/>
    </location>
</feature>
<feature type="turn" evidence="4">
    <location>
        <begin position="72"/>
        <end position="74"/>
    </location>
</feature>
<feature type="helix" evidence="4">
    <location>
        <begin position="76"/>
        <end position="89"/>
    </location>
</feature>
<feature type="helix" evidence="4">
    <location>
        <begin position="90"/>
        <end position="92"/>
    </location>
</feature>
<feature type="strand" evidence="3">
    <location>
        <begin position="94"/>
        <end position="96"/>
    </location>
</feature>
<feature type="helix" evidence="4">
    <location>
        <begin position="100"/>
        <end position="102"/>
    </location>
</feature>
<feature type="helix" evidence="4">
    <location>
        <begin position="103"/>
        <end position="118"/>
    </location>
</feature>
<feature type="helix" evidence="4">
    <location>
        <begin position="119"/>
        <end position="121"/>
    </location>
</feature>
<feature type="helix" evidence="4">
    <location>
        <begin position="124"/>
        <end position="145"/>
    </location>
</feature>
<sequence>GLSAAQRQVIAATWKDIAGADNGAGVGKDCLIKFLSAHPQMAAVFGFSGASDPGVAALGAKVLAQIGVAVSHLGDEGKMVAQMKAVGVRHKGYGNKHIKAQYFEPLGASLLSAMEHRIGGKMNAAAKDAWAAAYADISGALISGLQS</sequence>
<accession>P02216</accession>
<keyword id="KW-0002">3D-structure</keyword>
<keyword id="KW-0903">Direct protein sequencing</keyword>
<keyword id="KW-0349">Heme</keyword>
<keyword id="KW-0408">Iron</keyword>
<keyword id="KW-0479">Metal-binding</keyword>
<keyword id="KW-0561">Oxygen transport</keyword>
<keyword id="KW-0813">Transport</keyword>
<proteinExistence type="evidence at protein level"/>
<organism>
    <name type="scientific">Glycera dibranchiata</name>
    <name type="common">Bloodworm</name>
    <dbReference type="NCBI Taxonomy" id="6350"/>
    <lineage>
        <taxon>Eukaryota</taxon>
        <taxon>Metazoa</taxon>
        <taxon>Spiralia</taxon>
        <taxon>Lophotrochozoa</taxon>
        <taxon>Annelida</taxon>
        <taxon>Polychaeta</taxon>
        <taxon>Errantia</taxon>
        <taxon>Phyllodocida</taxon>
        <taxon>Glyceridae</taxon>
        <taxon>Glycera</taxon>
    </lineage>
</organism>
<evidence type="ECO:0000255" key="1">
    <source>
        <dbReference type="PROSITE-ProRule" id="PRU00238"/>
    </source>
</evidence>
<evidence type="ECO:0000305" key="2"/>
<evidence type="ECO:0007829" key="3">
    <source>
        <dbReference type="PDB" id="1HBG"/>
    </source>
</evidence>
<evidence type="ECO:0007829" key="4">
    <source>
        <dbReference type="PDB" id="1JF3"/>
    </source>
</evidence>
<name>GLB1_GLYDI</name>